<sequence length="389" mass="42092">MSEYLFTSESVSEGHPDKVADQVSDAILDAILAQDPKARVAAETLVNTGLCVLAGEITTTAQVDYIKVARETIKRIGYNSSELGFDANGCAVGVYYDQQSPDIAQGVNEGEGIDLNQGAGDQGLMFGYACDETPTLMPFAIYYSHRLMQRQSELRKDGRLPWLRPDAKAQLTVVYDSETGKVKRIDTVVLSTQHDPSVGYEELKNAVIEQIIKPVLPSELLTDETKYLINPTGRFVIGGPQGDCGLTGRKIIVDTYGGAAPHGGGAFSGKDPSKVDRSAAYACRYVAKNIVAAGLATQCQIQVSYAIGVAEPTSISIDTFGTGKISEEKLITLVREHFDLRPKGIVQMLDLLRPIYSKSAAYGHFGREEPEFTWERTDKAAALRAAAGL</sequence>
<gene>
    <name evidence="1" type="primary">metK</name>
    <name type="ordered locus">NMA0663</name>
</gene>
<protein>
    <recommendedName>
        <fullName evidence="1">S-adenosylmethionine synthase</fullName>
        <shortName evidence="1">AdoMet synthase</shortName>
        <ecNumber evidence="1">2.5.1.6</ecNumber>
    </recommendedName>
    <alternativeName>
        <fullName evidence="1">MAT</fullName>
    </alternativeName>
    <alternativeName>
        <fullName evidence="1">Methionine adenosyltransferase</fullName>
    </alternativeName>
</protein>
<name>METK_NEIMA</name>
<proteinExistence type="inferred from homology"/>
<keyword id="KW-0067">ATP-binding</keyword>
<keyword id="KW-0963">Cytoplasm</keyword>
<keyword id="KW-0460">Magnesium</keyword>
<keyword id="KW-0479">Metal-binding</keyword>
<keyword id="KW-0547">Nucleotide-binding</keyword>
<keyword id="KW-0554">One-carbon metabolism</keyword>
<keyword id="KW-0630">Potassium</keyword>
<keyword id="KW-0808">Transferase</keyword>
<evidence type="ECO:0000255" key="1">
    <source>
        <dbReference type="HAMAP-Rule" id="MF_00086"/>
    </source>
</evidence>
<dbReference type="EC" id="2.5.1.6" evidence="1"/>
<dbReference type="EMBL" id="AL157959">
    <property type="protein sequence ID" value="CAM07925.1"/>
    <property type="molecule type" value="Genomic_DNA"/>
</dbReference>
<dbReference type="PIR" id="E81986">
    <property type="entry name" value="E81986"/>
</dbReference>
<dbReference type="RefSeq" id="WP_002247057.1">
    <property type="nucleotide sequence ID" value="NC_003116.1"/>
</dbReference>
<dbReference type="SMR" id="Q9JVV6"/>
<dbReference type="EnsemblBacteria" id="CAM07925">
    <property type="protein sequence ID" value="CAM07925"/>
    <property type="gene ID" value="NMA0663"/>
</dbReference>
<dbReference type="GeneID" id="93386701"/>
<dbReference type="KEGG" id="nma:NMA0663"/>
<dbReference type="HOGENOM" id="CLU_041802_1_1_4"/>
<dbReference type="UniPathway" id="UPA00315">
    <property type="reaction ID" value="UER00080"/>
</dbReference>
<dbReference type="Proteomes" id="UP000000626">
    <property type="component" value="Chromosome"/>
</dbReference>
<dbReference type="GO" id="GO:0005737">
    <property type="term" value="C:cytoplasm"/>
    <property type="evidence" value="ECO:0007669"/>
    <property type="project" value="UniProtKB-SubCell"/>
</dbReference>
<dbReference type="GO" id="GO:0005524">
    <property type="term" value="F:ATP binding"/>
    <property type="evidence" value="ECO:0007669"/>
    <property type="project" value="UniProtKB-UniRule"/>
</dbReference>
<dbReference type="GO" id="GO:0000287">
    <property type="term" value="F:magnesium ion binding"/>
    <property type="evidence" value="ECO:0007669"/>
    <property type="project" value="UniProtKB-UniRule"/>
</dbReference>
<dbReference type="GO" id="GO:0004478">
    <property type="term" value="F:methionine adenosyltransferase activity"/>
    <property type="evidence" value="ECO:0007669"/>
    <property type="project" value="UniProtKB-UniRule"/>
</dbReference>
<dbReference type="GO" id="GO:0006730">
    <property type="term" value="P:one-carbon metabolic process"/>
    <property type="evidence" value="ECO:0007669"/>
    <property type="project" value="UniProtKB-KW"/>
</dbReference>
<dbReference type="GO" id="GO:0006556">
    <property type="term" value="P:S-adenosylmethionine biosynthetic process"/>
    <property type="evidence" value="ECO:0007669"/>
    <property type="project" value="UniProtKB-UniRule"/>
</dbReference>
<dbReference type="CDD" id="cd18079">
    <property type="entry name" value="S-AdoMet_synt"/>
    <property type="match status" value="1"/>
</dbReference>
<dbReference type="FunFam" id="3.30.300.10:FF:000003">
    <property type="entry name" value="S-adenosylmethionine synthase"/>
    <property type="match status" value="1"/>
</dbReference>
<dbReference type="FunFam" id="3.30.300.10:FF:000004">
    <property type="entry name" value="S-adenosylmethionine synthase"/>
    <property type="match status" value="1"/>
</dbReference>
<dbReference type="Gene3D" id="3.30.300.10">
    <property type="match status" value="3"/>
</dbReference>
<dbReference type="HAMAP" id="MF_00086">
    <property type="entry name" value="S_AdoMet_synth1"/>
    <property type="match status" value="1"/>
</dbReference>
<dbReference type="InterPro" id="IPR022631">
    <property type="entry name" value="ADOMET_SYNTHASE_CS"/>
</dbReference>
<dbReference type="InterPro" id="IPR022630">
    <property type="entry name" value="S-AdoMet_synt_C"/>
</dbReference>
<dbReference type="InterPro" id="IPR022629">
    <property type="entry name" value="S-AdoMet_synt_central"/>
</dbReference>
<dbReference type="InterPro" id="IPR022628">
    <property type="entry name" value="S-AdoMet_synt_N"/>
</dbReference>
<dbReference type="InterPro" id="IPR002133">
    <property type="entry name" value="S-AdoMet_synthetase"/>
</dbReference>
<dbReference type="InterPro" id="IPR022636">
    <property type="entry name" value="S-AdoMet_synthetase_sfam"/>
</dbReference>
<dbReference type="NCBIfam" id="TIGR01034">
    <property type="entry name" value="metK"/>
    <property type="match status" value="1"/>
</dbReference>
<dbReference type="PANTHER" id="PTHR11964">
    <property type="entry name" value="S-ADENOSYLMETHIONINE SYNTHETASE"/>
    <property type="match status" value="1"/>
</dbReference>
<dbReference type="Pfam" id="PF02773">
    <property type="entry name" value="S-AdoMet_synt_C"/>
    <property type="match status" value="1"/>
</dbReference>
<dbReference type="Pfam" id="PF02772">
    <property type="entry name" value="S-AdoMet_synt_M"/>
    <property type="match status" value="1"/>
</dbReference>
<dbReference type="Pfam" id="PF00438">
    <property type="entry name" value="S-AdoMet_synt_N"/>
    <property type="match status" value="1"/>
</dbReference>
<dbReference type="PIRSF" id="PIRSF000497">
    <property type="entry name" value="MAT"/>
    <property type="match status" value="1"/>
</dbReference>
<dbReference type="SUPFAM" id="SSF55973">
    <property type="entry name" value="S-adenosylmethionine synthetase"/>
    <property type="match status" value="3"/>
</dbReference>
<dbReference type="PROSITE" id="PS00376">
    <property type="entry name" value="ADOMET_SYNTHASE_1"/>
    <property type="match status" value="1"/>
</dbReference>
<dbReference type="PROSITE" id="PS00377">
    <property type="entry name" value="ADOMET_SYNTHASE_2"/>
    <property type="match status" value="1"/>
</dbReference>
<comment type="function">
    <text evidence="1">Catalyzes the formation of S-adenosylmethionine (AdoMet) from methionine and ATP. The overall synthetic reaction is composed of two sequential steps, AdoMet formation and the subsequent tripolyphosphate hydrolysis which occurs prior to release of AdoMet from the enzyme.</text>
</comment>
<comment type="catalytic activity">
    <reaction evidence="1">
        <text>L-methionine + ATP + H2O = S-adenosyl-L-methionine + phosphate + diphosphate</text>
        <dbReference type="Rhea" id="RHEA:21080"/>
        <dbReference type="ChEBI" id="CHEBI:15377"/>
        <dbReference type="ChEBI" id="CHEBI:30616"/>
        <dbReference type="ChEBI" id="CHEBI:33019"/>
        <dbReference type="ChEBI" id="CHEBI:43474"/>
        <dbReference type="ChEBI" id="CHEBI:57844"/>
        <dbReference type="ChEBI" id="CHEBI:59789"/>
        <dbReference type="EC" id="2.5.1.6"/>
    </reaction>
</comment>
<comment type="cofactor">
    <cofactor evidence="1">
        <name>Mg(2+)</name>
        <dbReference type="ChEBI" id="CHEBI:18420"/>
    </cofactor>
    <text evidence="1">Binds 2 divalent ions per subunit.</text>
</comment>
<comment type="cofactor">
    <cofactor evidence="1">
        <name>K(+)</name>
        <dbReference type="ChEBI" id="CHEBI:29103"/>
    </cofactor>
    <text evidence="1">Binds 1 potassium ion per subunit.</text>
</comment>
<comment type="pathway">
    <text evidence="1">Amino-acid biosynthesis; S-adenosyl-L-methionine biosynthesis; S-adenosyl-L-methionine from L-methionine: step 1/1.</text>
</comment>
<comment type="subunit">
    <text evidence="1">Homotetramer; dimer of dimers.</text>
</comment>
<comment type="subcellular location">
    <subcellularLocation>
        <location evidence="1">Cytoplasm</location>
    </subcellularLocation>
</comment>
<comment type="similarity">
    <text evidence="1">Belongs to the AdoMet synthase family.</text>
</comment>
<accession>Q9JVV6</accession>
<accession>A1IQ97</accession>
<feature type="chain" id="PRO_0000174559" description="S-adenosylmethionine synthase">
    <location>
        <begin position="1"/>
        <end position="389"/>
    </location>
</feature>
<feature type="region of interest" description="Flexible loop" evidence="1">
    <location>
        <begin position="99"/>
        <end position="109"/>
    </location>
</feature>
<feature type="binding site" description="in other chain" evidence="1">
    <location>
        <position position="15"/>
    </location>
    <ligand>
        <name>ATP</name>
        <dbReference type="ChEBI" id="CHEBI:30616"/>
        <note>ligand shared between two neighboring subunits</note>
    </ligand>
</feature>
<feature type="binding site" evidence="1">
    <location>
        <position position="17"/>
    </location>
    <ligand>
        <name>Mg(2+)</name>
        <dbReference type="ChEBI" id="CHEBI:18420"/>
    </ligand>
</feature>
<feature type="binding site" evidence="1">
    <location>
        <position position="43"/>
    </location>
    <ligand>
        <name>K(+)</name>
        <dbReference type="ChEBI" id="CHEBI:29103"/>
    </ligand>
</feature>
<feature type="binding site" description="in other chain" evidence="1">
    <location>
        <position position="56"/>
    </location>
    <ligand>
        <name>L-methionine</name>
        <dbReference type="ChEBI" id="CHEBI:57844"/>
        <note>ligand shared between two neighboring subunits</note>
    </ligand>
</feature>
<feature type="binding site" description="in other chain" evidence="1">
    <location>
        <position position="99"/>
    </location>
    <ligand>
        <name>L-methionine</name>
        <dbReference type="ChEBI" id="CHEBI:57844"/>
        <note>ligand shared between two neighboring subunits</note>
    </ligand>
</feature>
<feature type="binding site" description="in other chain" evidence="1">
    <location>
        <begin position="166"/>
        <end position="168"/>
    </location>
    <ligand>
        <name>ATP</name>
        <dbReference type="ChEBI" id="CHEBI:30616"/>
        <note>ligand shared between two neighboring subunits</note>
    </ligand>
</feature>
<feature type="binding site" description="in other chain" evidence="1">
    <location>
        <begin position="234"/>
        <end position="235"/>
    </location>
    <ligand>
        <name>ATP</name>
        <dbReference type="ChEBI" id="CHEBI:30616"/>
        <note>ligand shared between two neighboring subunits</note>
    </ligand>
</feature>
<feature type="binding site" evidence="1">
    <location>
        <position position="243"/>
    </location>
    <ligand>
        <name>ATP</name>
        <dbReference type="ChEBI" id="CHEBI:30616"/>
        <note>ligand shared between two neighboring subunits</note>
    </ligand>
</feature>
<feature type="binding site" evidence="1">
    <location>
        <position position="243"/>
    </location>
    <ligand>
        <name>L-methionine</name>
        <dbReference type="ChEBI" id="CHEBI:57844"/>
        <note>ligand shared between two neighboring subunits</note>
    </ligand>
</feature>
<feature type="binding site" description="in other chain" evidence="1">
    <location>
        <begin position="249"/>
        <end position="250"/>
    </location>
    <ligand>
        <name>ATP</name>
        <dbReference type="ChEBI" id="CHEBI:30616"/>
        <note>ligand shared between two neighboring subunits</note>
    </ligand>
</feature>
<feature type="binding site" evidence="1">
    <location>
        <position position="266"/>
    </location>
    <ligand>
        <name>ATP</name>
        <dbReference type="ChEBI" id="CHEBI:30616"/>
        <note>ligand shared between two neighboring subunits</note>
    </ligand>
</feature>
<feature type="binding site" evidence="1">
    <location>
        <position position="270"/>
    </location>
    <ligand>
        <name>ATP</name>
        <dbReference type="ChEBI" id="CHEBI:30616"/>
        <note>ligand shared between two neighboring subunits</note>
    </ligand>
</feature>
<feature type="binding site" description="in other chain" evidence="1">
    <location>
        <position position="274"/>
    </location>
    <ligand>
        <name>L-methionine</name>
        <dbReference type="ChEBI" id="CHEBI:57844"/>
        <note>ligand shared between two neighboring subunits</note>
    </ligand>
</feature>
<reference key="1">
    <citation type="journal article" date="2000" name="Nature">
        <title>Complete DNA sequence of a serogroup A strain of Neisseria meningitidis Z2491.</title>
        <authorList>
            <person name="Parkhill J."/>
            <person name="Achtman M."/>
            <person name="James K.D."/>
            <person name="Bentley S.D."/>
            <person name="Churcher C.M."/>
            <person name="Klee S.R."/>
            <person name="Morelli G."/>
            <person name="Basham D."/>
            <person name="Brown D."/>
            <person name="Chillingworth T."/>
            <person name="Davies R.M."/>
            <person name="Davis P."/>
            <person name="Devlin K."/>
            <person name="Feltwell T."/>
            <person name="Hamlin N."/>
            <person name="Holroyd S."/>
            <person name="Jagels K."/>
            <person name="Leather S."/>
            <person name="Moule S."/>
            <person name="Mungall K.L."/>
            <person name="Quail M.A."/>
            <person name="Rajandream M.A."/>
            <person name="Rutherford K.M."/>
            <person name="Simmonds M."/>
            <person name="Skelton J."/>
            <person name="Whitehead S."/>
            <person name="Spratt B.G."/>
            <person name="Barrell B.G."/>
        </authorList>
    </citation>
    <scope>NUCLEOTIDE SEQUENCE [LARGE SCALE GENOMIC DNA]</scope>
    <source>
        <strain>DSM 15465 / Z2491</strain>
    </source>
</reference>
<organism>
    <name type="scientific">Neisseria meningitidis serogroup A / serotype 4A (strain DSM 15465 / Z2491)</name>
    <dbReference type="NCBI Taxonomy" id="122587"/>
    <lineage>
        <taxon>Bacteria</taxon>
        <taxon>Pseudomonadati</taxon>
        <taxon>Pseudomonadota</taxon>
        <taxon>Betaproteobacteria</taxon>
        <taxon>Neisseriales</taxon>
        <taxon>Neisseriaceae</taxon>
        <taxon>Neisseria</taxon>
    </lineage>
</organism>